<sequence length="112" mass="12647">MQNLASQIQEKAVDSQQQLRTIMVQIAAKERALKISELAKKELEDVGEDKAVYTSLGKMFMKSDLASVRTHLDAEMASLREDIEALQKKQTYHETTASNAEQHLQKIKESIS</sequence>
<gene>
    <name type="ORF">SPBC1D7.01</name>
</gene>
<name>PFD1_SCHPO</name>
<comment type="function">
    <text evidence="1">Binds specifically to cytosolic chaperonin (c-CPN) and transfers target proteins to it. Binds to nascent polypeptide chain and promotes folding in an environment in which there are many competing pathways for nonnative proteins (By similarity).</text>
</comment>
<comment type="subunit">
    <text evidence="1">Heterohexamer of two PFD-alpha type and four PFD-beta type subunits.</text>
</comment>
<comment type="similarity">
    <text evidence="2">Belongs to the prefoldin subunit beta family.</text>
</comment>
<dbReference type="EMBL" id="CU329671">
    <property type="protein sequence ID" value="CAB10977.1"/>
    <property type="molecule type" value="Genomic_DNA"/>
</dbReference>
<dbReference type="PIR" id="T39864">
    <property type="entry name" value="T39864"/>
</dbReference>
<dbReference type="RefSeq" id="NP_595718.1">
    <property type="nucleotide sequence ID" value="NM_001021616.2"/>
</dbReference>
<dbReference type="SMR" id="O14334"/>
<dbReference type="BioGRID" id="277285">
    <property type="interactions" value="48"/>
</dbReference>
<dbReference type="FunCoup" id="O14334">
    <property type="interactions" value="541"/>
</dbReference>
<dbReference type="STRING" id="284812.O14334"/>
<dbReference type="iPTMnet" id="O14334"/>
<dbReference type="PaxDb" id="4896-SPBC1D7.01.1"/>
<dbReference type="EnsemblFungi" id="SPBC1D7.01.1">
    <property type="protein sequence ID" value="SPBC1D7.01.1:pep"/>
    <property type="gene ID" value="SPBC1D7.01"/>
</dbReference>
<dbReference type="PomBase" id="SPBC1D7.01"/>
<dbReference type="VEuPathDB" id="FungiDB:SPBC1D7.01"/>
<dbReference type="eggNOG" id="KOG3501">
    <property type="taxonomic scope" value="Eukaryota"/>
</dbReference>
<dbReference type="HOGENOM" id="CLU_122140_0_0_1"/>
<dbReference type="InParanoid" id="O14334"/>
<dbReference type="OMA" id="MFIRTDL"/>
<dbReference type="PhylomeDB" id="O14334"/>
<dbReference type="PRO" id="PR:O14334"/>
<dbReference type="Proteomes" id="UP000002485">
    <property type="component" value="Chromosome II"/>
</dbReference>
<dbReference type="GO" id="GO:0005737">
    <property type="term" value="C:cytoplasm"/>
    <property type="evidence" value="ECO:0000318"/>
    <property type="project" value="GO_Central"/>
</dbReference>
<dbReference type="GO" id="GO:0005829">
    <property type="term" value="C:cytosol"/>
    <property type="evidence" value="ECO:0007005"/>
    <property type="project" value="PomBase"/>
</dbReference>
<dbReference type="GO" id="GO:0005634">
    <property type="term" value="C:nucleus"/>
    <property type="evidence" value="ECO:0007005"/>
    <property type="project" value="PomBase"/>
</dbReference>
<dbReference type="GO" id="GO:0016272">
    <property type="term" value="C:prefoldin complex"/>
    <property type="evidence" value="ECO:0000266"/>
    <property type="project" value="PomBase"/>
</dbReference>
<dbReference type="GO" id="GO:0044183">
    <property type="term" value="F:protein folding chaperone"/>
    <property type="evidence" value="ECO:0000318"/>
    <property type="project" value="GO_Central"/>
</dbReference>
<dbReference type="GO" id="GO:0051082">
    <property type="term" value="F:unfolded protein binding"/>
    <property type="evidence" value="ECO:0000318"/>
    <property type="project" value="GO_Central"/>
</dbReference>
<dbReference type="GO" id="GO:0006457">
    <property type="term" value="P:protein folding"/>
    <property type="evidence" value="ECO:0000318"/>
    <property type="project" value="GO_Central"/>
</dbReference>
<dbReference type="GO" id="GO:0007021">
    <property type="term" value="P:tubulin complex assembly"/>
    <property type="evidence" value="ECO:0000266"/>
    <property type="project" value="PomBase"/>
</dbReference>
<dbReference type="Gene3D" id="1.10.287.370">
    <property type="match status" value="1"/>
</dbReference>
<dbReference type="InterPro" id="IPR002777">
    <property type="entry name" value="PFD_beta-like"/>
</dbReference>
<dbReference type="InterPro" id="IPR009053">
    <property type="entry name" value="Prefoldin"/>
</dbReference>
<dbReference type="PANTHER" id="PTHR20903:SF0">
    <property type="entry name" value="PREFOLDIN SUBUNIT 1"/>
    <property type="match status" value="1"/>
</dbReference>
<dbReference type="PANTHER" id="PTHR20903">
    <property type="entry name" value="PREFOLDIN SUBUNIT 1-RELATED"/>
    <property type="match status" value="1"/>
</dbReference>
<dbReference type="Pfam" id="PF01920">
    <property type="entry name" value="Prefoldin_2"/>
    <property type="match status" value="1"/>
</dbReference>
<dbReference type="SUPFAM" id="SSF46579">
    <property type="entry name" value="Prefoldin"/>
    <property type="match status" value="1"/>
</dbReference>
<feature type="chain" id="PRO_0000124833" description="Probable prefoldin subunit 1">
    <location>
        <begin position="1"/>
        <end position="112"/>
    </location>
</feature>
<proteinExistence type="inferred from homology"/>
<reference key="1">
    <citation type="journal article" date="2002" name="Nature">
        <title>The genome sequence of Schizosaccharomyces pombe.</title>
        <authorList>
            <person name="Wood V."/>
            <person name="Gwilliam R."/>
            <person name="Rajandream M.A."/>
            <person name="Lyne M.H."/>
            <person name="Lyne R."/>
            <person name="Stewart A."/>
            <person name="Sgouros J.G."/>
            <person name="Peat N."/>
            <person name="Hayles J."/>
            <person name="Baker S.G."/>
            <person name="Basham D."/>
            <person name="Bowman S."/>
            <person name="Brooks K."/>
            <person name="Brown D."/>
            <person name="Brown S."/>
            <person name="Chillingworth T."/>
            <person name="Churcher C.M."/>
            <person name="Collins M."/>
            <person name="Connor R."/>
            <person name="Cronin A."/>
            <person name="Davis P."/>
            <person name="Feltwell T."/>
            <person name="Fraser A."/>
            <person name="Gentles S."/>
            <person name="Goble A."/>
            <person name="Hamlin N."/>
            <person name="Harris D.E."/>
            <person name="Hidalgo J."/>
            <person name="Hodgson G."/>
            <person name="Holroyd S."/>
            <person name="Hornsby T."/>
            <person name="Howarth S."/>
            <person name="Huckle E.J."/>
            <person name="Hunt S."/>
            <person name="Jagels K."/>
            <person name="James K.D."/>
            <person name="Jones L."/>
            <person name="Jones M."/>
            <person name="Leather S."/>
            <person name="McDonald S."/>
            <person name="McLean J."/>
            <person name="Mooney P."/>
            <person name="Moule S."/>
            <person name="Mungall K.L."/>
            <person name="Murphy L.D."/>
            <person name="Niblett D."/>
            <person name="Odell C."/>
            <person name="Oliver K."/>
            <person name="O'Neil S."/>
            <person name="Pearson D."/>
            <person name="Quail M.A."/>
            <person name="Rabbinowitsch E."/>
            <person name="Rutherford K.M."/>
            <person name="Rutter S."/>
            <person name="Saunders D."/>
            <person name="Seeger K."/>
            <person name="Sharp S."/>
            <person name="Skelton J."/>
            <person name="Simmonds M.N."/>
            <person name="Squares R."/>
            <person name="Squares S."/>
            <person name="Stevens K."/>
            <person name="Taylor K."/>
            <person name="Taylor R.G."/>
            <person name="Tivey A."/>
            <person name="Walsh S.V."/>
            <person name="Warren T."/>
            <person name="Whitehead S."/>
            <person name="Woodward J.R."/>
            <person name="Volckaert G."/>
            <person name="Aert R."/>
            <person name="Robben J."/>
            <person name="Grymonprez B."/>
            <person name="Weltjens I."/>
            <person name="Vanstreels E."/>
            <person name="Rieger M."/>
            <person name="Schaefer M."/>
            <person name="Mueller-Auer S."/>
            <person name="Gabel C."/>
            <person name="Fuchs M."/>
            <person name="Duesterhoeft A."/>
            <person name="Fritzc C."/>
            <person name="Holzer E."/>
            <person name="Moestl D."/>
            <person name="Hilbert H."/>
            <person name="Borzym K."/>
            <person name="Langer I."/>
            <person name="Beck A."/>
            <person name="Lehrach H."/>
            <person name="Reinhardt R."/>
            <person name="Pohl T.M."/>
            <person name="Eger P."/>
            <person name="Zimmermann W."/>
            <person name="Wedler H."/>
            <person name="Wambutt R."/>
            <person name="Purnelle B."/>
            <person name="Goffeau A."/>
            <person name="Cadieu E."/>
            <person name="Dreano S."/>
            <person name="Gloux S."/>
            <person name="Lelaure V."/>
            <person name="Mottier S."/>
            <person name="Galibert F."/>
            <person name="Aves S.J."/>
            <person name="Xiang Z."/>
            <person name="Hunt C."/>
            <person name="Moore K."/>
            <person name="Hurst S.M."/>
            <person name="Lucas M."/>
            <person name="Rochet M."/>
            <person name="Gaillardin C."/>
            <person name="Tallada V.A."/>
            <person name="Garzon A."/>
            <person name="Thode G."/>
            <person name="Daga R.R."/>
            <person name="Cruzado L."/>
            <person name="Jimenez J."/>
            <person name="Sanchez M."/>
            <person name="del Rey F."/>
            <person name="Benito J."/>
            <person name="Dominguez A."/>
            <person name="Revuelta J.L."/>
            <person name="Moreno S."/>
            <person name="Armstrong J."/>
            <person name="Forsburg S.L."/>
            <person name="Cerutti L."/>
            <person name="Lowe T."/>
            <person name="McCombie W.R."/>
            <person name="Paulsen I."/>
            <person name="Potashkin J."/>
            <person name="Shpakovski G.V."/>
            <person name="Ussery D."/>
            <person name="Barrell B.G."/>
            <person name="Nurse P."/>
        </authorList>
    </citation>
    <scope>NUCLEOTIDE SEQUENCE [LARGE SCALE GENOMIC DNA]</scope>
    <source>
        <strain>972 / ATCC 24843</strain>
    </source>
</reference>
<organism>
    <name type="scientific">Schizosaccharomyces pombe (strain 972 / ATCC 24843)</name>
    <name type="common">Fission yeast</name>
    <dbReference type="NCBI Taxonomy" id="284812"/>
    <lineage>
        <taxon>Eukaryota</taxon>
        <taxon>Fungi</taxon>
        <taxon>Dikarya</taxon>
        <taxon>Ascomycota</taxon>
        <taxon>Taphrinomycotina</taxon>
        <taxon>Schizosaccharomycetes</taxon>
        <taxon>Schizosaccharomycetales</taxon>
        <taxon>Schizosaccharomycetaceae</taxon>
        <taxon>Schizosaccharomyces</taxon>
    </lineage>
</organism>
<protein>
    <recommendedName>
        <fullName>Probable prefoldin subunit 1</fullName>
    </recommendedName>
</protein>
<accession>O14334</accession>
<evidence type="ECO:0000250" key="1"/>
<evidence type="ECO:0000305" key="2"/>
<keyword id="KW-0143">Chaperone</keyword>
<keyword id="KW-1185">Reference proteome</keyword>